<reference key="1">
    <citation type="journal article" date="1990" name="Neuron">
        <title>Synaptoporin, a novel putative channel protein of synaptic vesicles.</title>
        <authorList>
            <person name="Knaus P."/>
            <person name="Marqueze-Pouey B."/>
            <person name="Scherer H."/>
            <person name="Betz H."/>
        </authorList>
    </citation>
    <scope>NUCLEOTIDE SEQUENCE [MRNA]</scope>
    <source>
        <tissue>Brain</tissue>
    </source>
</reference>
<reference key="2">
    <citation type="submission" date="2000-09" db="EMBL/GenBank/DDBJ databases">
        <title>Novel genes expressed in rat dorsal root ganglion.</title>
        <authorList>
            <person name="Xiao H."/>
            <person name="Huang Q."/>
            <person name="Zhang F."/>
            <person name="Yang Z."/>
            <person name="Chen Z."/>
            <person name="Han Z."/>
            <person name="Zhang X."/>
        </authorList>
    </citation>
    <scope>NUCLEOTIDE SEQUENCE [MRNA]</scope>
    <source>
        <strain>Sprague-Dawley</strain>
        <tissue>Spinal ganglion</tissue>
    </source>
</reference>
<reference key="3">
    <citation type="journal article" date="2012" name="Nat. Commun.">
        <title>Quantitative maps of protein phosphorylation sites across 14 different rat organs and tissues.</title>
        <authorList>
            <person name="Lundby A."/>
            <person name="Secher A."/>
            <person name="Lage K."/>
            <person name="Nordsborg N.B."/>
            <person name="Dmytriyev A."/>
            <person name="Lundby C."/>
            <person name="Olsen J.V."/>
        </authorList>
    </citation>
    <scope>PHOSPHORYLATION [LARGE SCALE ANALYSIS] AT SER-212</scope>
    <scope>IDENTIFICATION BY MASS SPECTROMETRY [LARGE SCALE ANALYSIS]</scope>
</reference>
<sequence>MCMVIFAPLFAIFAFATCGGYSGGLRLSVDCVNKTESNLSIDIAFAYPFRLHQVTFEVPTCEGKERQKLALVGDSSSSAEFFVTVAVFAFLYSLAATVVYIFFQNKYRENNRGPLIDFIVTVVFSFLWLVGSSAWAKGLSDVKVATDPKEVLLLMSACKQPSNKCMAVHSPVMSSLNTSVVFGFLNFILWAGNIWFVFKETGWHSSGQRYLSDPMEKHSSSYNQGGYNQDSYGSSGGYSQQASLGPTSDEFGQQPSGPTSFNNQI</sequence>
<comment type="function">
    <text>Intrinsic membrane protein of small synaptic vesicles. Probable vesicular channel protein.</text>
</comment>
<comment type="subcellular location">
    <subcellularLocation>
        <location>Cytoplasmic vesicle</location>
        <location>Secretory vesicle</location>
        <location>Synaptic vesicle membrane</location>
        <topology>Multi-pass membrane protein</topology>
    </subcellularLocation>
    <subcellularLocation>
        <location>Synapse</location>
        <location>Synaptosome</location>
    </subcellularLocation>
</comment>
<comment type="tissue specificity">
    <text>Central nervous system.</text>
</comment>
<comment type="similarity">
    <text evidence="4">Belongs to the synaptophysin/synaptobrevin family.</text>
</comment>
<gene>
    <name type="primary">Synpr</name>
</gene>
<proteinExistence type="evidence at protein level"/>
<evidence type="ECO:0000255" key="1"/>
<evidence type="ECO:0000255" key="2">
    <source>
        <dbReference type="PROSITE-ProRule" id="PRU00581"/>
    </source>
</evidence>
<evidence type="ECO:0000256" key="3">
    <source>
        <dbReference type="SAM" id="MobiDB-lite"/>
    </source>
</evidence>
<evidence type="ECO:0000305" key="4"/>
<evidence type="ECO:0007744" key="5">
    <source>
    </source>
</evidence>
<feature type="chain" id="PRO_0000179159" description="Synaptoporin">
    <location>
        <begin position="1"/>
        <end position="265"/>
    </location>
</feature>
<feature type="topological domain" description="Cytoplasmic" evidence="1">
    <location>
        <begin position="1"/>
        <end position="4"/>
    </location>
</feature>
<feature type="transmembrane region" description="Helical" evidence="1">
    <location>
        <begin position="5"/>
        <end position="25"/>
    </location>
</feature>
<feature type="topological domain" description="Vesicular" evidence="1">
    <location>
        <begin position="26"/>
        <end position="81"/>
    </location>
</feature>
<feature type="transmembrane region" description="Helical" evidence="1">
    <location>
        <begin position="82"/>
        <end position="102"/>
    </location>
</feature>
<feature type="topological domain" description="Cytoplasmic" evidence="1">
    <location>
        <begin position="103"/>
        <end position="114"/>
    </location>
</feature>
<feature type="transmembrane region" description="Helical" evidence="1">
    <location>
        <begin position="115"/>
        <end position="135"/>
    </location>
</feature>
<feature type="topological domain" description="Vesicular" evidence="1">
    <location>
        <begin position="136"/>
        <end position="177"/>
    </location>
</feature>
<feature type="transmembrane region" description="Helical" evidence="1">
    <location>
        <begin position="178"/>
        <end position="198"/>
    </location>
</feature>
<feature type="topological domain" description="Cytoplasmic" evidence="1">
    <location>
        <begin position="199"/>
        <end position="265"/>
    </location>
</feature>
<feature type="domain" description="MARVEL" evidence="2">
    <location>
        <begin position="1"/>
        <end position="202"/>
    </location>
</feature>
<feature type="repeat" description="1">
    <location>
        <begin position="210"/>
        <end position="214"/>
    </location>
</feature>
<feature type="repeat" description="2">
    <location>
        <begin position="222"/>
        <end position="226"/>
    </location>
</feature>
<feature type="repeat" description="3">
    <location>
        <begin position="227"/>
        <end position="231"/>
    </location>
</feature>
<feature type="repeat" description="4">
    <location>
        <begin position="232"/>
        <end position="236"/>
    </location>
</feature>
<feature type="repeat" description="5">
    <location>
        <begin position="238"/>
        <end position="242"/>
    </location>
</feature>
<feature type="region of interest" description="5 X approximate repeats">
    <location>
        <begin position="210"/>
        <end position="242"/>
    </location>
</feature>
<feature type="region of interest" description="Disordered" evidence="3">
    <location>
        <begin position="221"/>
        <end position="265"/>
    </location>
</feature>
<feature type="compositionally biased region" description="Low complexity" evidence="3">
    <location>
        <begin position="224"/>
        <end position="243"/>
    </location>
</feature>
<feature type="compositionally biased region" description="Polar residues" evidence="3">
    <location>
        <begin position="244"/>
        <end position="265"/>
    </location>
</feature>
<feature type="modified residue" description="Phosphoserine" evidence="5">
    <location>
        <position position="212"/>
    </location>
</feature>
<feature type="modified residue" description="Phosphoserine" evidence="1">
    <location>
        <position position="220"/>
    </location>
</feature>
<feature type="glycosylation site" description="N-linked (GlcNAc...) asparagine" evidence="1">
    <location>
        <position position="33"/>
    </location>
</feature>
<feature type="glycosylation site" description="N-linked (GlcNAc...) asparagine" evidence="1">
    <location>
        <position position="38"/>
    </location>
</feature>
<feature type="glycosylation site" description="N-linked (GlcNAc...) asparagine" evidence="1">
    <location>
        <position position="177"/>
    </location>
</feature>
<feature type="sequence conflict" description="In Ref. 1." evidence="4" ref="1">
    <original>KL</original>
    <variation>NV</variation>
    <location>
        <begin position="68"/>
        <end position="69"/>
    </location>
</feature>
<feature type="sequence conflict" description="In Ref. 1." evidence="4" ref="1">
    <original>A</original>
    <variation>G</variation>
    <location>
        <position position="167"/>
    </location>
</feature>
<name>SYNPR_RAT</name>
<organism>
    <name type="scientific">Rattus norvegicus</name>
    <name type="common">Rat</name>
    <dbReference type="NCBI Taxonomy" id="10116"/>
    <lineage>
        <taxon>Eukaryota</taxon>
        <taxon>Metazoa</taxon>
        <taxon>Chordata</taxon>
        <taxon>Craniata</taxon>
        <taxon>Vertebrata</taxon>
        <taxon>Euteleostomi</taxon>
        <taxon>Mammalia</taxon>
        <taxon>Eutheria</taxon>
        <taxon>Euarchontoglires</taxon>
        <taxon>Glires</taxon>
        <taxon>Rodentia</taxon>
        <taxon>Myomorpha</taxon>
        <taxon>Muroidea</taxon>
        <taxon>Muridae</taxon>
        <taxon>Murinae</taxon>
        <taxon>Rattus</taxon>
    </lineage>
</organism>
<protein>
    <recommendedName>
        <fullName>Synaptoporin</fullName>
    </recommendedName>
</protein>
<dbReference type="EMBL" id="AF306459">
    <property type="protein sequence ID" value="AAG33231.1"/>
    <property type="molecule type" value="mRNA"/>
</dbReference>
<dbReference type="PIR" id="JH0300">
    <property type="entry name" value="JH0300"/>
</dbReference>
<dbReference type="RefSeq" id="NP_076464.1">
    <property type="nucleotide sequence ID" value="NM_023974.1"/>
</dbReference>
<dbReference type="SMR" id="P22831"/>
<dbReference type="FunCoup" id="P22831">
    <property type="interactions" value="1020"/>
</dbReference>
<dbReference type="STRING" id="10116.ENSRNOP00000011307"/>
<dbReference type="GlyCosmos" id="P22831">
    <property type="glycosylation" value="3 sites, No reported glycans"/>
</dbReference>
<dbReference type="GlyGen" id="P22831">
    <property type="glycosylation" value="3 sites"/>
</dbReference>
<dbReference type="iPTMnet" id="P22831"/>
<dbReference type="PhosphoSitePlus" id="P22831"/>
<dbReference type="PaxDb" id="10116-ENSRNOP00000011307"/>
<dbReference type="Ensembl" id="ENSRNOT00000011307.6">
    <property type="protein sequence ID" value="ENSRNOP00000011307.3"/>
    <property type="gene ID" value="ENSRNOG00000008203.6"/>
</dbReference>
<dbReference type="GeneID" id="66030"/>
<dbReference type="KEGG" id="rno:66030"/>
<dbReference type="AGR" id="RGD:708366"/>
<dbReference type="CTD" id="132204"/>
<dbReference type="RGD" id="708366">
    <property type="gene designation" value="Synpr"/>
</dbReference>
<dbReference type="eggNOG" id="ENOG502QT4W">
    <property type="taxonomic scope" value="Eukaryota"/>
</dbReference>
<dbReference type="GeneTree" id="ENSGT01030000234637"/>
<dbReference type="InParanoid" id="P22831"/>
<dbReference type="PhylomeDB" id="P22831"/>
<dbReference type="TreeFam" id="TF315804"/>
<dbReference type="PRO" id="PR:P22831"/>
<dbReference type="Proteomes" id="UP000002494">
    <property type="component" value="Chromosome 15"/>
</dbReference>
<dbReference type="Bgee" id="ENSRNOG00000008203">
    <property type="expression patterns" value="Expressed in frontal cortex and 15 other cell types or tissues"/>
</dbReference>
<dbReference type="ExpressionAtlas" id="P22831">
    <property type="expression patterns" value="baseline and differential"/>
</dbReference>
<dbReference type="GO" id="GO:0098686">
    <property type="term" value="C:hippocampal mossy fiber to CA3 synapse"/>
    <property type="evidence" value="ECO:0000314"/>
    <property type="project" value="SynGO"/>
</dbReference>
<dbReference type="GO" id="GO:0043005">
    <property type="term" value="C:neuron projection"/>
    <property type="evidence" value="ECO:0007669"/>
    <property type="project" value="UniProtKB-KW"/>
</dbReference>
<dbReference type="GO" id="GO:0030672">
    <property type="term" value="C:synaptic vesicle membrane"/>
    <property type="evidence" value="ECO:0000314"/>
    <property type="project" value="SynGO"/>
</dbReference>
<dbReference type="GO" id="GO:0050804">
    <property type="term" value="P:modulation of chemical synaptic transmission"/>
    <property type="evidence" value="ECO:0000314"/>
    <property type="project" value="SynGO"/>
</dbReference>
<dbReference type="InterPro" id="IPR008253">
    <property type="entry name" value="Marvel"/>
</dbReference>
<dbReference type="InterPro" id="IPR001285">
    <property type="entry name" value="Synaptophysin/porin"/>
</dbReference>
<dbReference type="PANTHER" id="PTHR10306">
    <property type="entry name" value="SYNAPTOPHYSIN"/>
    <property type="match status" value="1"/>
</dbReference>
<dbReference type="PANTHER" id="PTHR10306:SF16">
    <property type="entry name" value="SYNAPTOPORIN"/>
    <property type="match status" value="1"/>
</dbReference>
<dbReference type="Pfam" id="PF01284">
    <property type="entry name" value="MARVEL"/>
    <property type="match status" value="1"/>
</dbReference>
<dbReference type="PRINTS" id="PR00220">
    <property type="entry name" value="SYNAPTOPHYSN"/>
</dbReference>
<dbReference type="PROSITE" id="PS51225">
    <property type="entry name" value="MARVEL"/>
    <property type="match status" value="1"/>
</dbReference>
<dbReference type="PROSITE" id="PS00604">
    <property type="entry name" value="SYNAPTOP"/>
    <property type="match status" value="1"/>
</dbReference>
<accession>P22831</accession>
<accession>Q9ERH1</accession>
<keyword id="KW-0968">Cytoplasmic vesicle</keyword>
<keyword id="KW-0325">Glycoprotein</keyword>
<keyword id="KW-0472">Membrane</keyword>
<keyword id="KW-0597">Phosphoprotein</keyword>
<keyword id="KW-1185">Reference proteome</keyword>
<keyword id="KW-0677">Repeat</keyword>
<keyword id="KW-0770">Synapse</keyword>
<keyword id="KW-0771">Synaptosome</keyword>
<keyword id="KW-0812">Transmembrane</keyword>
<keyword id="KW-1133">Transmembrane helix</keyword>